<comment type="function">
    <text evidence="1">DNA repair enzyme involved in the repair of deaminated bases. Selectively cleaves double-stranded DNA at the second phosphodiester bond 3' to a deoxyinosine leaving behind the intact lesion on the nicked DNA.</text>
</comment>
<comment type="catalytic activity">
    <reaction evidence="1">
        <text>Endonucleolytic cleavage at apurinic or apyrimidinic sites to products with a 5'-phosphate.</text>
        <dbReference type="EC" id="3.1.21.7"/>
    </reaction>
</comment>
<comment type="cofactor">
    <cofactor evidence="1">
        <name>Mg(2+)</name>
        <dbReference type="ChEBI" id="CHEBI:18420"/>
    </cofactor>
</comment>
<comment type="subcellular location">
    <subcellularLocation>
        <location evidence="1">Cytoplasm</location>
    </subcellularLocation>
</comment>
<comment type="similarity">
    <text evidence="1">Belongs to the endonuclease V family.</text>
</comment>
<protein>
    <recommendedName>
        <fullName evidence="1">Endonuclease V</fullName>
        <ecNumber evidence="1">3.1.21.7</ecNumber>
    </recommendedName>
    <alternativeName>
        <fullName evidence="1">Deoxyinosine 3'endonuclease</fullName>
    </alternativeName>
    <alternativeName>
        <fullName evidence="1">Deoxyribonuclease V</fullName>
        <shortName evidence="1">DNase V</shortName>
    </alternativeName>
</protein>
<evidence type="ECO:0000255" key="1">
    <source>
        <dbReference type="HAMAP-Rule" id="MF_00801"/>
    </source>
</evidence>
<proteinExistence type="inferred from homology"/>
<keyword id="KW-0963">Cytoplasm</keyword>
<keyword id="KW-0227">DNA damage</keyword>
<keyword id="KW-0234">DNA repair</keyword>
<keyword id="KW-0255">Endonuclease</keyword>
<keyword id="KW-0378">Hydrolase</keyword>
<keyword id="KW-0460">Magnesium</keyword>
<keyword id="KW-0479">Metal-binding</keyword>
<keyword id="KW-0540">Nuclease</keyword>
<name>NFI_SALCH</name>
<accession>Q57H57</accession>
<feature type="chain" id="PRO_0000159667" description="Endonuclease V">
    <location>
        <begin position="1"/>
        <end position="223"/>
    </location>
</feature>
<feature type="binding site" evidence="1">
    <location>
        <position position="35"/>
    </location>
    <ligand>
        <name>Mg(2+)</name>
        <dbReference type="ChEBI" id="CHEBI:18420"/>
    </ligand>
</feature>
<feature type="binding site" evidence="1">
    <location>
        <position position="103"/>
    </location>
    <ligand>
        <name>Mg(2+)</name>
        <dbReference type="ChEBI" id="CHEBI:18420"/>
    </ligand>
</feature>
<feature type="site" description="Interaction with target DNA" evidence="1">
    <location>
        <position position="73"/>
    </location>
</feature>
<sequence length="223" mass="24746">MDLASLRAQQIELASSVCREDRLDKDPPAFIGGADVGFEQGGEVTRAAMVLLKYPSLELVEYKVARIATTMPYIPGFLSFREYPALLAAWEQLSQKPDLLFVDGHGISHPRRLGVASHFGLLVDVPTIGVAKKRLCGKFEPLSAEPGALSPLMDKGEQLAWVWRSKARCNPLFIATGHRVSTDSALAWVQRCMKGYRLPEPTRWADAVASGRPAFVRWQEIQR</sequence>
<reference key="1">
    <citation type="journal article" date="2005" name="Nucleic Acids Res.">
        <title>The genome sequence of Salmonella enterica serovar Choleraesuis, a highly invasive and resistant zoonotic pathogen.</title>
        <authorList>
            <person name="Chiu C.-H."/>
            <person name="Tang P."/>
            <person name="Chu C."/>
            <person name="Hu S."/>
            <person name="Bao Q."/>
            <person name="Yu J."/>
            <person name="Chou Y.-Y."/>
            <person name="Wang H.-S."/>
            <person name="Lee Y.-S."/>
        </authorList>
    </citation>
    <scope>NUCLEOTIDE SEQUENCE [LARGE SCALE GENOMIC DNA]</scope>
    <source>
        <strain>SC-B67</strain>
    </source>
</reference>
<dbReference type="EC" id="3.1.21.7" evidence="1"/>
<dbReference type="EMBL" id="AE017220">
    <property type="protein sequence ID" value="AAX67955.1"/>
    <property type="molecule type" value="Genomic_DNA"/>
</dbReference>
<dbReference type="RefSeq" id="WP_000362359.1">
    <property type="nucleotide sequence ID" value="NC_006905.1"/>
</dbReference>
<dbReference type="SMR" id="Q57H57"/>
<dbReference type="KEGG" id="sec:SCH_4049"/>
<dbReference type="HOGENOM" id="CLU_047631_1_0_6"/>
<dbReference type="Proteomes" id="UP000000538">
    <property type="component" value="Chromosome"/>
</dbReference>
<dbReference type="GO" id="GO:0005737">
    <property type="term" value="C:cytoplasm"/>
    <property type="evidence" value="ECO:0007669"/>
    <property type="project" value="UniProtKB-SubCell"/>
</dbReference>
<dbReference type="GO" id="GO:0043737">
    <property type="term" value="F:deoxyribonuclease V activity"/>
    <property type="evidence" value="ECO:0007669"/>
    <property type="project" value="UniProtKB-UniRule"/>
</dbReference>
<dbReference type="GO" id="GO:0000287">
    <property type="term" value="F:magnesium ion binding"/>
    <property type="evidence" value="ECO:0007669"/>
    <property type="project" value="UniProtKB-UniRule"/>
</dbReference>
<dbReference type="GO" id="GO:0016891">
    <property type="term" value="F:RNA endonuclease activity, producing 5'-phosphomonoesters"/>
    <property type="evidence" value="ECO:0007669"/>
    <property type="project" value="TreeGrafter"/>
</dbReference>
<dbReference type="GO" id="GO:0003727">
    <property type="term" value="F:single-stranded RNA binding"/>
    <property type="evidence" value="ECO:0007669"/>
    <property type="project" value="TreeGrafter"/>
</dbReference>
<dbReference type="GO" id="GO:0006281">
    <property type="term" value="P:DNA repair"/>
    <property type="evidence" value="ECO:0007669"/>
    <property type="project" value="UniProtKB-UniRule"/>
</dbReference>
<dbReference type="CDD" id="cd06559">
    <property type="entry name" value="Endonuclease_V"/>
    <property type="match status" value="1"/>
</dbReference>
<dbReference type="FunFam" id="3.30.2170.10:FF:000001">
    <property type="entry name" value="Endonuclease V"/>
    <property type="match status" value="1"/>
</dbReference>
<dbReference type="Gene3D" id="3.30.2170.10">
    <property type="entry name" value="archaeoglobus fulgidus dsm 4304 superfamily"/>
    <property type="match status" value="1"/>
</dbReference>
<dbReference type="HAMAP" id="MF_00801">
    <property type="entry name" value="Endonuclease_5"/>
    <property type="match status" value="1"/>
</dbReference>
<dbReference type="InterPro" id="IPR007581">
    <property type="entry name" value="Endonuclease-V"/>
</dbReference>
<dbReference type="NCBIfam" id="NF008629">
    <property type="entry name" value="PRK11617.1"/>
    <property type="match status" value="1"/>
</dbReference>
<dbReference type="PANTHER" id="PTHR28511">
    <property type="entry name" value="ENDONUCLEASE V"/>
    <property type="match status" value="1"/>
</dbReference>
<dbReference type="PANTHER" id="PTHR28511:SF1">
    <property type="entry name" value="ENDONUCLEASE V"/>
    <property type="match status" value="1"/>
</dbReference>
<dbReference type="Pfam" id="PF04493">
    <property type="entry name" value="Endonuclease_5"/>
    <property type="match status" value="1"/>
</dbReference>
<organism>
    <name type="scientific">Salmonella choleraesuis (strain SC-B67)</name>
    <dbReference type="NCBI Taxonomy" id="321314"/>
    <lineage>
        <taxon>Bacteria</taxon>
        <taxon>Pseudomonadati</taxon>
        <taxon>Pseudomonadota</taxon>
        <taxon>Gammaproteobacteria</taxon>
        <taxon>Enterobacterales</taxon>
        <taxon>Enterobacteriaceae</taxon>
        <taxon>Salmonella</taxon>
    </lineage>
</organism>
<gene>
    <name evidence="1" type="primary">nfi</name>
    <name type="ordered locus">SCH_4049</name>
</gene>